<proteinExistence type="inferred from homology"/>
<dbReference type="EC" id="2.8.1.6" evidence="1"/>
<dbReference type="EMBL" id="CP000029">
    <property type="protein sequence ID" value="AAW53138.1"/>
    <property type="molecule type" value="Genomic_DNA"/>
</dbReference>
<dbReference type="RefSeq" id="WP_001830464.1">
    <property type="nucleotide sequence ID" value="NC_002976.3"/>
</dbReference>
<dbReference type="SMR" id="Q5HKJ7"/>
<dbReference type="STRING" id="176279.SERP2347"/>
<dbReference type="GeneID" id="50017629"/>
<dbReference type="KEGG" id="ser:SERP2347"/>
<dbReference type="eggNOG" id="COG0502">
    <property type="taxonomic scope" value="Bacteria"/>
</dbReference>
<dbReference type="HOGENOM" id="CLU_033172_2_1_9"/>
<dbReference type="UniPathway" id="UPA00078">
    <property type="reaction ID" value="UER00162"/>
</dbReference>
<dbReference type="Proteomes" id="UP000000531">
    <property type="component" value="Chromosome"/>
</dbReference>
<dbReference type="GO" id="GO:0051537">
    <property type="term" value="F:2 iron, 2 sulfur cluster binding"/>
    <property type="evidence" value="ECO:0007669"/>
    <property type="project" value="UniProtKB-KW"/>
</dbReference>
<dbReference type="GO" id="GO:0051539">
    <property type="term" value="F:4 iron, 4 sulfur cluster binding"/>
    <property type="evidence" value="ECO:0007669"/>
    <property type="project" value="UniProtKB-KW"/>
</dbReference>
<dbReference type="GO" id="GO:0004076">
    <property type="term" value="F:biotin synthase activity"/>
    <property type="evidence" value="ECO:0007669"/>
    <property type="project" value="UniProtKB-UniRule"/>
</dbReference>
<dbReference type="GO" id="GO:0005506">
    <property type="term" value="F:iron ion binding"/>
    <property type="evidence" value="ECO:0007669"/>
    <property type="project" value="UniProtKB-UniRule"/>
</dbReference>
<dbReference type="GO" id="GO:0009102">
    <property type="term" value="P:biotin biosynthetic process"/>
    <property type="evidence" value="ECO:0007669"/>
    <property type="project" value="UniProtKB-UniRule"/>
</dbReference>
<dbReference type="CDD" id="cd01335">
    <property type="entry name" value="Radical_SAM"/>
    <property type="match status" value="1"/>
</dbReference>
<dbReference type="FunFam" id="3.20.20.70:FF:000026">
    <property type="entry name" value="Biotin synthase"/>
    <property type="match status" value="1"/>
</dbReference>
<dbReference type="Gene3D" id="3.20.20.70">
    <property type="entry name" value="Aldolase class I"/>
    <property type="match status" value="1"/>
</dbReference>
<dbReference type="HAMAP" id="MF_01694">
    <property type="entry name" value="BioB"/>
    <property type="match status" value="1"/>
</dbReference>
<dbReference type="InterPro" id="IPR013785">
    <property type="entry name" value="Aldolase_TIM"/>
</dbReference>
<dbReference type="InterPro" id="IPR010722">
    <property type="entry name" value="BATS_dom"/>
</dbReference>
<dbReference type="InterPro" id="IPR002684">
    <property type="entry name" value="Biotin_synth/BioAB"/>
</dbReference>
<dbReference type="InterPro" id="IPR024177">
    <property type="entry name" value="Biotin_synthase"/>
</dbReference>
<dbReference type="InterPro" id="IPR006638">
    <property type="entry name" value="Elp3/MiaA/NifB-like_rSAM"/>
</dbReference>
<dbReference type="InterPro" id="IPR007197">
    <property type="entry name" value="rSAM"/>
</dbReference>
<dbReference type="NCBIfam" id="TIGR00433">
    <property type="entry name" value="bioB"/>
    <property type="match status" value="1"/>
</dbReference>
<dbReference type="PANTHER" id="PTHR22976">
    <property type="entry name" value="BIOTIN SYNTHASE"/>
    <property type="match status" value="1"/>
</dbReference>
<dbReference type="PANTHER" id="PTHR22976:SF2">
    <property type="entry name" value="BIOTIN SYNTHASE, MITOCHONDRIAL"/>
    <property type="match status" value="1"/>
</dbReference>
<dbReference type="Pfam" id="PF06968">
    <property type="entry name" value="BATS"/>
    <property type="match status" value="1"/>
</dbReference>
<dbReference type="Pfam" id="PF04055">
    <property type="entry name" value="Radical_SAM"/>
    <property type="match status" value="1"/>
</dbReference>
<dbReference type="PIRSF" id="PIRSF001619">
    <property type="entry name" value="Biotin_synth"/>
    <property type="match status" value="1"/>
</dbReference>
<dbReference type="SFLD" id="SFLDG01060">
    <property type="entry name" value="BATS_domain_containing"/>
    <property type="match status" value="1"/>
</dbReference>
<dbReference type="SFLD" id="SFLDG01278">
    <property type="entry name" value="biotin_synthase_like"/>
    <property type="match status" value="1"/>
</dbReference>
<dbReference type="SMART" id="SM00876">
    <property type="entry name" value="BATS"/>
    <property type="match status" value="1"/>
</dbReference>
<dbReference type="SMART" id="SM00729">
    <property type="entry name" value="Elp3"/>
    <property type="match status" value="1"/>
</dbReference>
<dbReference type="SUPFAM" id="SSF102114">
    <property type="entry name" value="Radical SAM enzymes"/>
    <property type="match status" value="1"/>
</dbReference>
<dbReference type="PROSITE" id="PS51918">
    <property type="entry name" value="RADICAL_SAM"/>
    <property type="match status" value="1"/>
</dbReference>
<name>BIOB_STAEQ</name>
<evidence type="ECO:0000255" key="1">
    <source>
        <dbReference type="HAMAP-Rule" id="MF_01694"/>
    </source>
</evidence>
<evidence type="ECO:0000255" key="2">
    <source>
        <dbReference type="PROSITE-ProRule" id="PRU01266"/>
    </source>
</evidence>
<comment type="function">
    <text evidence="1">Catalyzes the conversion of dethiobiotin (DTB) to biotin by the insertion of a sulfur atom into dethiobiotin via a radical-based mechanism.</text>
</comment>
<comment type="catalytic activity">
    <reaction evidence="1">
        <text>(4R,5S)-dethiobiotin + (sulfur carrier)-SH + 2 reduced [2Fe-2S]-[ferredoxin] + 2 S-adenosyl-L-methionine = (sulfur carrier)-H + biotin + 2 5'-deoxyadenosine + 2 L-methionine + 2 oxidized [2Fe-2S]-[ferredoxin]</text>
        <dbReference type="Rhea" id="RHEA:22060"/>
        <dbReference type="Rhea" id="RHEA-COMP:10000"/>
        <dbReference type="Rhea" id="RHEA-COMP:10001"/>
        <dbReference type="Rhea" id="RHEA-COMP:14737"/>
        <dbReference type="Rhea" id="RHEA-COMP:14739"/>
        <dbReference type="ChEBI" id="CHEBI:17319"/>
        <dbReference type="ChEBI" id="CHEBI:29917"/>
        <dbReference type="ChEBI" id="CHEBI:33737"/>
        <dbReference type="ChEBI" id="CHEBI:33738"/>
        <dbReference type="ChEBI" id="CHEBI:57586"/>
        <dbReference type="ChEBI" id="CHEBI:57844"/>
        <dbReference type="ChEBI" id="CHEBI:59789"/>
        <dbReference type="ChEBI" id="CHEBI:64428"/>
        <dbReference type="ChEBI" id="CHEBI:149473"/>
        <dbReference type="EC" id="2.8.1.6"/>
    </reaction>
</comment>
<comment type="cofactor">
    <cofactor evidence="1">
        <name>[4Fe-4S] cluster</name>
        <dbReference type="ChEBI" id="CHEBI:49883"/>
    </cofactor>
    <text evidence="1">Binds 1 [4Fe-4S] cluster. The cluster is coordinated with 3 cysteines and an exchangeable S-adenosyl-L-methionine.</text>
</comment>
<comment type="cofactor">
    <cofactor evidence="1">
        <name>[2Fe-2S] cluster</name>
        <dbReference type="ChEBI" id="CHEBI:190135"/>
    </cofactor>
    <text evidence="1">Binds 1 [2Fe-2S] cluster. The cluster is coordinated with 3 cysteines and 1 arginine.</text>
</comment>
<comment type="pathway">
    <text evidence="1">Cofactor biosynthesis; biotin biosynthesis; biotin from 7,8-diaminononanoate: step 2/2.</text>
</comment>
<comment type="subunit">
    <text evidence="1">Homodimer.</text>
</comment>
<comment type="similarity">
    <text evidence="1">Belongs to the radical SAM superfamily. Biotin synthase family.</text>
</comment>
<accession>Q5HKJ7</accession>
<reference key="1">
    <citation type="journal article" date="2005" name="J. Bacteriol.">
        <title>Insights on evolution of virulence and resistance from the complete genome analysis of an early methicillin-resistant Staphylococcus aureus strain and a biofilm-producing methicillin-resistant Staphylococcus epidermidis strain.</title>
        <authorList>
            <person name="Gill S.R."/>
            <person name="Fouts D.E."/>
            <person name="Archer G.L."/>
            <person name="Mongodin E.F."/>
            <person name="DeBoy R.T."/>
            <person name="Ravel J."/>
            <person name="Paulsen I.T."/>
            <person name="Kolonay J.F."/>
            <person name="Brinkac L.M."/>
            <person name="Beanan M.J."/>
            <person name="Dodson R.J."/>
            <person name="Daugherty S.C."/>
            <person name="Madupu R."/>
            <person name="Angiuoli S.V."/>
            <person name="Durkin A.S."/>
            <person name="Haft D.H."/>
            <person name="Vamathevan J.J."/>
            <person name="Khouri H."/>
            <person name="Utterback T.R."/>
            <person name="Lee C."/>
            <person name="Dimitrov G."/>
            <person name="Jiang L."/>
            <person name="Qin H."/>
            <person name="Weidman J."/>
            <person name="Tran K."/>
            <person name="Kang K.H."/>
            <person name="Hance I.R."/>
            <person name="Nelson K.E."/>
            <person name="Fraser C.M."/>
        </authorList>
    </citation>
    <scope>NUCLEOTIDE SEQUENCE [LARGE SCALE GENOMIC DNA]</scope>
    <source>
        <strain>ATCC 35984 / DSM 28319 / BCRC 17069 / CCUG 31568 / BM 3577 / RP62A</strain>
    </source>
</reference>
<keyword id="KW-0001">2Fe-2S</keyword>
<keyword id="KW-0004">4Fe-4S</keyword>
<keyword id="KW-0093">Biotin biosynthesis</keyword>
<keyword id="KW-0408">Iron</keyword>
<keyword id="KW-0411">Iron-sulfur</keyword>
<keyword id="KW-0479">Metal-binding</keyword>
<keyword id="KW-1185">Reference proteome</keyword>
<keyword id="KW-0949">S-adenosyl-L-methionine</keyword>
<keyword id="KW-0808">Transferase</keyword>
<feature type="chain" id="PRO_0000381657" description="Biotin synthase">
    <location>
        <begin position="1"/>
        <end position="321"/>
    </location>
</feature>
<feature type="domain" description="Radical SAM core" evidence="2">
    <location>
        <begin position="45"/>
        <end position="271"/>
    </location>
</feature>
<feature type="binding site" evidence="1">
    <location>
        <position position="63"/>
    </location>
    <ligand>
        <name>[4Fe-4S] cluster</name>
        <dbReference type="ChEBI" id="CHEBI:49883"/>
        <note>4Fe-4S-S-AdoMet</note>
    </ligand>
</feature>
<feature type="binding site" evidence="1">
    <location>
        <position position="67"/>
    </location>
    <ligand>
        <name>[4Fe-4S] cluster</name>
        <dbReference type="ChEBI" id="CHEBI:49883"/>
        <note>4Fe-4S-S-AdoMet</note>
    </ligand>
</feature>
<feature type="binding site" evidence="1">
    <location>
        <position position="70"/>
    </location>
    <ligand>
        <name>[4Fe-4S] cluster</name>
        <dbReference type="ChEBI" id="CHEBI:49883"/>
        <note>4Fe-4S-S-AdoMet</note>
    </ligand>
</feature>
<feature type="binding site" evidence="1">
    <location>
        <position position="106"/>
    </location>
    <ligand>
        <name>[2Fe-2S] cluster</name>
        <dbReference type="ChEBI" id="CHEBI:190135"/>
    </ligand>
</feature>
<feature type="binding site" evidence="1">
    <location>
        <position position="139"/>
    </location>
    <ligand>
        <name>[2Fe-2S] cluster</name>
        <dbReference type="ChEBI" id="CHEBI:190135"/>
    </ligand>
</feature>
<feature type="binding site" evidence="1">
    <location>
        <position position="199"/>
    </location>
    <ligand>
        <name>[2Fe-2S] cluster</name>
        <dbReference type="ChEBI" id="CHEBI:190135"/>
    </ligand>
</feature>
<feature type="binding site" evidence="1">
    <location>
        <position position="269"/>
    </location>
    <ligand>
        <name>[2Fe-2S] cluster</name>
        <dbReference type="ChEBI" id="CHEBI:190135"/>
    </ligand>
</feature>
<protein>
    <recommendedName>
        <fullName evidence="1">Biotin synthase</fullName>
        <ecNumber evidence="1">2.8.1.6</ecNumber>
    </recommendedName>
</protein>
<sequence>MTLNLAQRVLNQESLTKDEAISIFENAEIDTFDLLNEAYTVRKHYYGKKVKLNMILNAKSGICAEDCGYCGQSVKMKEKQRYALVEQDQIKEGAQVATENQIGTYCIVMSGRGPSNREVDHICETVEDIKKIHPQLKICACLGLTKEEQAKKLKAAGVDRYNHNLNTSERYHDEVVTTHTYEDRVNTVEMMKDNNISPCSGVICGMGESNEDIIDMAFALRAIDADSIPINFLHPIKGTKFGGLDLLSPMKCLRIIAMFRLINPTKEIRIAGGREVNLRSLQPLALKAANSIFVGDYLITGGQPNEEDYRMIEDLGFEIDS</sequence>
<gene>
    <name evidence="1" type="primary">bioB</name>
    <name type="ordered locus">SERP2347</name>
</gene>
<organism>
    <name type="scientific">Staphylococcus epidermidis (strain ATCC 35984 / DSM 28319 / BCRC 17069 / CCUG 31568 / BM 3577 / RP62A)</name>
    <dbReference type="NCBI Taxonomy" id="176279"/>
    <lineage>
        <taxon>Bacteria</taxon>
        <taxon>Bacillati</taxon>
        <taxon>Bacillota</taxon>
        <taxon>Bacilli</taxon>
        <taxon>Bacillales</taxon>
        <taxon>Staphylococcaceae</taxon>
        <taxon>Staphylococcus</taxon>
    </lineage>
</organism>